<evidence type="ECO:0000255" key="1">
    <source>
        <dbReference type="HAMAP-Rule" id="MF_01147"/>
    </source>
</evidence>
<accession>A9BE82</accession>
<comment type="function">
    <text evidence="1">Catalyzes the transfer of the diacylglyceryl group from phosphatidylglycerol to the sulfhydryl group of the N-terminal cysteine of a prolipoprotein, the first step in the formation of mature lipoproteins.</text>
</comment>
<comment type="catalytic activity">
    <reaction evidence="1">
        <text>L-cysteinyl-[prolipoprotein] + a 1,2-diacyl-sn-glycero-3-phospho-(1'-sn-glycerol) = an S-1,2-diacyl-sn-glyceryl-L-cysteinyl-[prolipoprotein] + sn-glycerol 1-phosphate + H(+)</text>
        <dbReference type="Rhea" id="RHEA:56712"/>
        <dbReference type="Rhea" id="RHEA-COMP:14679"/>
        <dbReference type="Rhea" id="RHEA-COMP:14680"/>
        <dbReference type="ChEBI" id="CHEBI:15378"/>
        <dbReference type="ChEBI" id="CHEBI:29950"/>
        <dbReference type="ChEBI" id="CHEBI:57685"/>
        <dbReference type="ChEBI" id="CHEBI:64716"/>
        <dbReference type="ChEBI" id="CHEBI:140658"/>
        <dbReference type="EC" id="2.5.1.145"/>
    </reaction>
</comment>
<comment type="pathway">
    <text evidence="1">Protein modification; lipoprotein biosynthesis (diacylglyceryl transfer).</text>
</comment>
<comment type="subcellular location">
    <subcellularLocation>
        <location evidence="1">Cell inner membrane</location>
        <topology evidence="1">Multi-pass membrane protein</topology>
    </subcellularLocation>
</comment>
<comment type="similarity">
    <text evidence="1">Belongs to the Lgt family.</text>
</comment>
<proteinExistence type="inferred from homology"/>
<feature type="chain" id="PRO_1000137443" description="Phosphatidylglycerol--prolipoprotein diacylglyceryl transferase">
    <location>
        <begin position="1"/>
        <end position="303"/>
    </location>
</feature>
<feature type="transmembrane region" description="Helical" evidence="1">
    <location>
        <begin position="18"/>
        <end position="38"/>
    </location>
</feature>
<feature type="transmembrane region" description="Helical" evidence="1">
    <location>
        <begin position="58"/>
        <end position="78"/>
    </location>
</feature>
<feature type="transmembrane region" description="Helical" evidence="1">
    <location>
        <begin position="107"/>
        <end position="127"/>
    </location>
</feature>
<feature type="transmembrane region" description="Helical" evidence="1">
    <location>
        <begin position="193"/>
        <end position="213"/>
    </location>
</feature>
<feature type="transmembrane region" description="Helical" evidence="1">
    <location>
        <begin position="266"/>
        <end position="286"/>
    </location>
</feature>
<feature type="binding site" evidence="1">
    <location>
        <position position="154"/>
    </location>
    <ligand>
        <name>a 1,2-diacyl-sn-glycero-3-phospho-(1'-sn-glycerol)</name>
        <dbReference type="ChEBI" id="CHEBI:64716"/>
    </ligand>
</feature>
<reference key="1">
    <citation type="journal article" date="2007" name="PLoS Genet.">
        <title>Patterns and implications of gene gain and loss in the evolution of Prochlorococcus.</title>
        <authorList>
            <person name="Kettler G.C."/>
            <person name="Martiny A.C."/>
            <person name="Huang K."/>
            <person name="Zucker J."/>
            <person name="Coleman M.L."/>
            <person name="Rodrigue S."/>
            <person name="Chen F."/>
            <person name="Lapidus A."/>
            <person name="Ferriera S."/>
            <person name="Johnson J."/>
            <person name="Steglich C."/>
            <person name="Church G.M."/>
            <person name="Richardson P."/>
            <person name="Chisholm S.W."/>
        </authorList>
    </citation>
    <scope>NUCLEOTIDE SEQUENCE [LARGE SCALE GENOMIC DNA]</scope>
    <source>
        <strain>MIT 9211</strain>
    </source>
</reference>
<gene>
    <name evidence="1" type="primary">lgt</name>
    <name type="ordered locus">P9211_04611</name>
</gene>
<protein>
    <recommendedName>
        <fullName evidence="1">Phosphatidylglycerol--prolipoprotein diacylglyceryl transferase</fullName>
        <ecNumber evidence="1">2.5.1.145</ecNumber>
    </recommendedName>
</protein>
<dbReference type="EC" id="2.5.1.145" evidence="1"/>
<dbReference type="EMBL" id="CP000878">
    <property type="protein sequence ID" value="ABX08392.1"/>
    <property type="molecule type" value="Genomic_DNA"/>
</dbReference>
<dbReference type="RefSeq" id="WP_012195015.1">
    <property type="nucleotide sequence ID" value="NC_009976.1"/>
</dbReference>
<dbReference type="SMR" id="A9BE82"/>
<dbReference type="STRING" id="93059.P9211_04611"/>
<dbReference type="KEGG" id="pmj:P9211_04611"/>
<dbReference type="eggNOG" id="COG0682">
    <property type="taxonomic scope" value="Bacteria"/>
</dbReference>
<dbReference type="HOGENOM" id="CLU_013386_1_2_3"/>
<dbReference type="OrthoDB" id="871140at2"/>
<dbReference type="UniPathway" id="UPA00664"/>
<dbReference type="Proteomes" id="UP000000788">
    <property type="component" value="Chromosome"/>
</dbReference>
<dbReference type="GO" id="GO:0005886">
    <property type="term" value="C:plasma membrane"/>
    <property type="evidence" value="ECO:0007669"/>
    <property type="project" value="UniProtKB-SubCell"/>
</dbReference>
<dbReference type="GO" id="GO:0008961">
    <property type="term" value="F:phosphatidylglycerol-prolipoprotein diacylglyceryl transferase activity"/>
    <property type="evidence" value="ECO:0007669"/>
    <property type="project" value="UniProtKB-UniRule"/>
</dbReference>
<dbReference type="GO" id="GO:0042158">
    <property type="term" value="P:lipoprotein biosynthetic process"/>
    <property type="evidence" value="ECO:0007669"/>
    <property type="project" value="UniProtKB-UniRule"/>
</dbReference>
<dbReference type="HAMAP" id="MF_01147">
    <property type="entry name" value="Lgt"/>
    <property type="match status" value="1"/>
</dbReference>
<dbReference type="InterPro" id="IPR001640">
    <property type="entry name" value="Lgt"/>
</dbReference>
<dbReference type="NCBIfam" id="TIGR00544">
    <property type="entry name" value="lgt"/>
    <property type="match status" value="1"/>
</dbReference>
<dbReference type="PANTHER" id="PTHR30589:SF0">
    <property type="entry name" value="PHOSPHATIDYLGLYCEROL--PROLIPOPROTEIN DIACYLGLYCERYL TRANSFERASE"/>
    <property type="match status" value="1"/>
</dbReference>
<dbReference type="PANTHER" id="PTHR30589">
    <property type="entry name" value="PROLIPOPROTEIN DIACYLGLYCERYL TRANSFERASE"/>
    <property type="match status" value="1"/>
</dbReference>
<dbReference type="Pfam" id="PF01790">
    <property type="entry name" value="LGT"/>
    <property type="match status" value="1"/>
</dbReference>
<dbReference type="PROSITE" id="PS01311">
    <property type="entry name" value="LGT"/>
    <property type="match status" value="1"/>
</dbReference>
<organism>
    <name type="scientific">Prochlorococcus marinus (strain MIT 9211)</name>
    <dbReference type="NCBI Taxonomy" id="93059"/>
    <lineage>
        <taxon>Bacteria</taxon>
        <taxon>Bacillati</taxon>
        <taxon>Cyanobacteriota</taxon>
        <taxon>Cyanophyceae</taxon>
        <taxon>Synechococcales</taxon>
        <taxon>Prochlorococcaceae</taxon>
        <taxon>Prochlorococcus</taxon>
    </lineage>
</organism>
<sequence length="303" mass="34076">MEAYFATFRSPGPELLKVGFFTLRWYGLLIAFAVLIGLNLSNKLASIKGLSKNLINDLLPILVISSIIGARAYYVIFEWRNYSGSNFWSSIQAFGLTISIPTFIKVWQGGIAIHGALLAGTIAILIFCRLKQEDFWDVLDVLIPSVALGQAIGRWGNFFNNEAFGLPTDLPWKLFIPYPYRPEFFLDNNYFHPTFLYESIWNILLFLCLISLIRLSIKGKLKLPSGSLSCVYAIIYSLGRVWIEGLRTDPLCLGGVPPFCIGGIRIAQLISTILFGLGLLGLFWIYQRKKKLPSLGIIGRKHQ</sequence>
<name>LGT_PROM4</name>
<keyword id="KW-0997">Cell inner membrane</keyword>
<keyword id="KW-1003">Cell membrane</keyword>
<keyword id="KW-0472">Membrane</keyword>
<keyword id="KW-1185">Reference proteome</keyword>
<keyword id="KW-0808">Transferase</keyword>
<keyword id="KW-0812">Transmembrane</keyword>
<keyword id="KW-1133">Transmembrane helix</keyword>